<sequence>MQMWPPEPSIHFGNFSMEKLYEGKAKILYPTEDPDVLLTIFKDDATAFNAQKKGQIQGKGAINCAISAALFRWLETLGIPTHYIDCPQNDQMLVKAVNIIPLEVVVRNIAAGSLCKQTGLKEGLVLPNPLVEFYFKDDALGDPLLTWERALLLGVTDEARLQTLKDLALNINQHLQRFFAQCDITLVDFKLEFGGDRQGKIILADEISPDTCRLWDNAQADPQARVLDKDRFRRDLGSIEAAYQTVEKRVLSQIERLQSQMGAF</sequence>
<reference key="1">
    <citation type="journal article" date="1996" name="DNA Res.">
        <title>Sequence analysis of the genome of the unicellular cyanobacterium Synechocystis sp. strain PCC6803. II. Sequence determination of the entire genome and assignment of potential protein-coding regions.</title>
        <authorList>
            <person name="Kaneko T."/>
            <person name="Sato S."/>
            <person name="Kotani H."/>
            <person name="Tanaka A."/>
            <person name="Asamizu E."/>
            <person name="Nakamura Y."/>
            <person name="Miyajima N."/>
            <person name="Hirosawa M."/>
            <person name="Sugiura M."/>
            <person name="Sasamoto S."/>
            <person name="Kimura T."/>
            <person name="Hosouchi T."/>
            <person name="Matsuno A."/>
            <person name="Muraki A."/>
            <person name="Nakazaki N."/>
            <person name="Naruo K."/>
            <person name="Okumura S."/>
            <person name="Shimpo S."/>
            <person name="Takeuchi C."/>
            <person name="Wada T."/>
            <person name="Watanabe A."/>
            <person name="Yamada M."/>
            <person name="Yasuda M."/>
            <person name="Tabata S."/>
        </authorList>
    </citation>
    <scope>NUCLEOTIDE SEQUENCE [LARGE SCALE GENOMIC DNA]</scope>
    <source>
        <strain>ATCC 27184 / PCC 6803 / Kazusa</strain>
    </source>
</reference>
<dbReference type="EC" id="6.3.2.6"/>
<dbReference type="EMBL" id="BA000022">
    <property type="protein sequence ID" value="BAA17511.1"/>
    <property type="molecule type" value="Genomic_DNA"/>
</dbReference>
<dbReference type="PIR" id="S77408">
    <property type="entry name" value="S77408"/>
</dbReference>
<dbReference type="SMR" id="P73471"/>
<dbReference type="FunCoup" id="P73471">
    <property type="interactions" value="399"/>
</dbReference>
<dbReference type="STRING" id="1148.gene:10498376"/>
<dbReference type="PaxDb" id="1148-1652590"/>
<dbReference type="EnsemblBacteria" id="BAA17511">
    <property type="protein sequence ID" value="BAA17511"/>
    <property type="gene ID" value="BAA17511"/>
</dbReference>
<dbReference type="KEGG" id="syn:slr1226"/>
<dbReference type="eggNOG" id="COG0152">
    <property type="taxonomic scope" value="Bacteria"/>
</dbReference>
<dbReference type="InParanoid" id="P73471"/>
<dbReference type="PhylomeDB" id="P73471"/>
<dbReference type="UniPathway" id="UPA00074">
    <property type="reaction ID" value="UER00131"/>
</dbReference>
<dbReference type="Proteomes" id="UP000001425">
    <property type="component" value="Chromosome"/>
</dbReference>
<dbReference type="GO" id="GO:0005524">
    <property type="term" value="F:ATP binding"/>
    <property type="evidence" value="ECO:0007669"/>
    <property type="project" value="UniProtKB-KW"/>
</dbReference>
<dbReference type="GO" id="GO:0004639">
    <property type="term" value="F:phosphoribosylaminoimidazolesuccinocarboxamide synthase activity"/>
    <property type="evidence" value="ECO:0007669"/>
    <property type="project" value="UniProtKB-UniRule"/>
</dbReference>
<dbReference type="GO" id="GO:0006189">
    <property type="term" value="P:'de novo' IMP biosynthetic process"/>
    <property type="evidence" value="ECO:0007669"/>
    <property type="project" value="UniProtKB-UniRule"/>
</dbReference>
<dbReference type="GO" id="GO:0009236">
    <property type="term" value="P:cobalamin biosynthetic process"/>
    <property type="evidence" value="ECO:0007669"/>
    <property type="project" value="InterPro"/>
</dbReference>
<dbReference type="CDD" id="cd01415">
    <property type="entry name" value="SAICAR_synt_PurC"/>
    <property type="match status" value="1"/>
</dbReference>
<dbReference type="FunFam" id="3.30.200.20:FF:000086">
    <property type="entry name" value="Phosphoribosylaminoimidazole-succinocarboxamide synthase"/>
    <property type="match status" value="1"/>
</dbReference>
<dbReference type="FunFam" id="3.30.470.20:FF:000006">
    <property type="entry name" value="Phosphoribosylaminoimidazole-succinocarboxamide synthase"/>
    <property type="match status" value="1"/>
</dbReference>
<dbReference type="Gene3D" id="3.30.470.20">
    <property type="entry name" value="ATP-grasp fold, B domain"/>
    <property type="match status" value="1"/>
</dbReference>
<dbReference type="Gene3D" id="3.30.200.20">
    <property type="entry name" value="Phosphorylase Kinase, domain 1"/>
    <property type="match status" value="1"/>
</dbReference>
<dbReference type="HAMAP" id="MF_00137">
    <property type="entry name" value="SAICAR_synth"/>
    <property type="match status" value="1"/>
</dbReference>
<dbReference type="InterPro" id="IPR028923">
    <property type="entry name" value="SAICAR_synt/ADE2_N"/>
</dbReference>
<dbReference type="InterPro" id="IPR033934">
    <property type="entry name" value="SAICAR_synt_PurC"/>
</dbReference>
<dbReference type="InterPro" id="IPR001636">
    <property type="entry name" value="SAICAR_synth"/>
</dbReference>
<dbReference type="InterPro" id="IPR050089">
    <property type="entry name" value="SAICAR_synthetase"/>
</dbReference>
<dbReference type="InterPro" id="IPR018236">
    <property type="entry name" value="SAICAR_synthetase_CS"/>
</dbReference>
<dbReference type="NCBIfam" id="TIGR00081">
    <property type="entry name" value="purC"/>
    <property type="match status" value="1"/>
</dbReference>
<dbReference type="PANTHER" id="PTHR43599">
    <property type="entry name" value="MULTIFUNCTIONAL PROTEIN ADE2"/>
    <property type="match status" value="1"/>
</dbReference>
<dbReference type="PANTHER" id="PTHR43599:SF3">
    <property type="entry name" value="SI:DKEY-6E2.2"/>
    <property type="match status" value="1"/>
</dbReference>
<dbReference type="Pfam" id="PF01259">
    <property type="entry name" value="SAICAR_synt"/>
    <property type="match status" value="1"/>
</dbReference>
<dbReference type="SUPFAM" id="SSF56104">
    <property type="entry name" value="SAICAR synthase-like"/>
    <property type="match status" value="1"/>
</dbReference>
<dbReference type="PROSITE" id="PS01057">
    <property type="entry name" value="SAICAR_SYNTHETASE_1"/>
    <property type="match status" value="1"/>
</dbReference>
<dbReference type="PROSITE" id="PS01058">
    <property type="entry name" value="SAICAR_SYNTHETASE_2"/>
    <property type="match status" value="1"/>
</dbReference>
<proteinExistence type="inferred from homology"/>
<protein>
    <recommendedName>
        <fullName>Phosphoribosylaminoimidazole-succinocarboxamide synthase</fullName>
        <ecNumber>6.3.2.6</ecNumber>
    </recommendedName>
    <alternativeName>
        <fullName>SAICAR synthetase</fullName>
    </alternativeName>
</protein>
<accession>P73471</accession>
<evidence type="ECO:0000305" key="1"/>
<name>PUR7_SYNY3</name>
<feature type="chain" id="PRO_0000100890" description="Phosphoribosylaminoimidazole-succinocarboxamide synthase">
    <location>
        <begin position="1"/>
        <end position="264"/>
    </location>
</feature>
<organism>
    <name type="scientific">Synechocystis sp. (strain ATCC 27184 / PCC 6803 / Kazusa)</name>
    <dbReference type="NCBI Taxonomy" id="1111708"/>
    <lineage>
        <taxon>Bacteria</taxon>
        <taxon>Bacillati</taxon>
        <taxon>Cyanobacteriota</taxon>
        <taxon>Cyanophyceae</taxon>
        <taxon>Synechococcales</taxon>
        <taxon>Merismopediaceae</taxon>
        <taxon>Synechocystis</taxon>
    </lineage>
</organism>
<gene>
    <name type="primary">purC</name>
    <name type="ordered locus">slr1226</name>
</gene>
<comment type="catalytic activity">
    <reaction>
        <text>5-amino-1-(5-phospho-D-ribosyl)imidazole-4-carboxylate + L-aspartate + ATP = (2S)-2-[5-amino-1-(5-phospho-beta-D-ribosyl)imidazole-4-carboxamido]succinate + ADP + phosphate + 2 H(+)</text>
        <dbReference type="Rhea" id="RHEA:22628"/>
        <dbReference type="ChEBI" id="CHEBI:15378"/>
        <dbReference type="ChEBI" id="CHEBI:29991"/>
        <dbReference type="ChEBI" id="CHEBI:30616"/>
        <dbReference type="ChEBI" id="CHEBI:43474"/>
        <dbReference type="ChEBI" id="CHEBI:58443"/>
        <dbReference type="ChEBI" id="CHEBI:77657"/>
        <dbReference type="ChEBI" id="CHEBI:456216"/>
        <dbReference type="EC" id="6.3.2.6"/>
    </reaction>
</comment>
<comment type="pathway">
    <text>Purine metabolism; IMP biosynthesis via de novo pathway; 5-amino-1-(5-phospho-D-ribosyl)imidazole-4-carboxamide from 5-amino-1-(5-phospho-D-ribosyl)imidazole-4-carboxylate: step 1/2.</text>
</comment>
<comment type="similarity">
    <text evidence="1">Belongs to the SAICAR synthetase family.</text>
</comment>
<keyword id="KW-0067">ATP-binding</keyword>
<keyword id="KW-0436">Ligase</keyword>
<keyword id="KW-0547">Nucleotide-binding</keyword>
<keyword id="KW-0658">Purine biosynthesis</keyword>
<keyword id="KW-1185">Reference proteome</keyword>